<reference evidence="3 5" key="1">
    <citation type="journal article" date="2001" name="Biochem. Biophys. Res. Commun.">
        <title>A family of Turandot-related genes in the humoral stress response of Drosophila.</title>
        <authorList>
            <person name="Ekengren S."/>
            <person name="Hultmark D."/>
        </authorList>
    </citation>
    <scope>NUCLEOTIDE SEQUENCE [MRNA]</scope>
    <scope>POSSIBLE FUNCTION</scope>
    <scope>DEVELOPMENTAL STAGE</scope>
    <scope>INDUCTION</scope>
    <source>
        <strain evidence="5">Canton-S</strain>
        <tissue evidence="2">Embryo</tissue>
    </source>
</reference>
<reference evidence="4" key="2">
    <citation type="journal article" date="2000" name="Science">
        <title>The genome sequence of Drosophila melanogaster.</title>
        <authorList>
            <person name="Adams M.D."/>
            <person name="Celniker S.E."/>
            <person name="Holt R.A."/>
            <person name="Evans C.A."/>
            <person name="Gocayne J.D."/>
            <person name="Amanatides P.G."/>
            <person name="Scherer S.E."/>
            <person name="Li P.W."/>
            <person name="Hoskins R.A."/>
            <person name="Galle R.F."/>
            <person name="George R.A."/>
            <person name="Lewis S.E."/>
            <person name="Richards S."/>
            <person name="Ashburner M."/>
            <person name="Henderson S.N."/>
            <person name="Sutton G.G."/>
            <person name="Wortman J.R."/>
            <person name="Yandell M.D."/>
            <person name="Zhang Q."/>
            <person name="Chen L.X."/>
            <person name="Brandon R.C."/>
            <person name="Rogers Y.-H.C."/>
            <person name="Blazej R.G."/>
            <person name="Champe M."/>
            <person name="Pfeiffer B.D."/>
            <person name="Wan K.H."/>
            <person name="Doyle C."/>
            <person name="Baxter E.G."/>
            <person name="Helt G."/>
            <person name="Nelson C.R."/>
            <person name="Miklos G.L.G."/>
            <person name="Abril J.F."/>
            <person name="Agbayani A."/>
            <person name="An H.-J."/>
            <person name="Andrews-Pfannkoch C."/>
            <person name="Baldwin D."/>
            <person name="Ballew R.M."/>
            <person name="Basu A."/>
            <person name="Baxendale J."/>
            <person name="Bayraktaroglu L."/>
            <person name="Beasley E.M."/>
            <person name="Beeson K.Y."/>
            <person name="Benos P.V."/>
            <person name="Berman B.P."/>
            <person name="Bhandari D."/>
            <person name="Bolshakov S."/>
            <person name="Borkova D."/>
            <person name="Botchan M.R."/>
            <person name="Bouck J."/>
            <person name="Brokstein P."/>
            <person name="Brottier P."/>
            <person name="Burtis K.C."/>
            <person name="Busam D.A."/>
            <person name="Butler H."/>
            <person name="Cadieu E."/>
            <person name="Center A."/>
            <person name="Chandra I."/>
            <person name="Cherry J.M."/>
            <person name="Cawley S."/>
            <person name="Dahlke C."/>
            <person name="Davenport L.B."/>
            <person name="Davies P."/>
            <person name="de Pablos B."/>
            <person name="Delcher A."/>
            <person name="Deng Z."/>
            <person name="Mays A.D."/>
            <person name="Dew I."/>
            <person name="Dietz S.M."/>
            <person name="Dodson K."/>
            <person name="Doup L.E."/>
            <person name="Downes M."/>
            <person name="Dugan-Rocha S."/>
            <person name="Dunkov B.C."/>
            <person name="Dunn P."/>
            <person name="Durbin K.J."/>
            <person name="Evangelista C.C."/>
            <person name="Ferraz C."/>
            <person name="Ferriera S."/>
            <person name="Fleischmann W."/>
            <person name="Fosler C."/>
            <person name="Gabrielian A.E."/>
            <person name="Garg N.S."/>
            <person name="Gelbart W.M."/>
            <person name="Glasser K."/>
            <person name="Glodek A."/>
            <person name="Gong F."/>
            <person name="Gorrell J.H."/>
            <person name="Gu Z."/>
            <person name="Guan P."/>
            <person name="Harris M."/>
            <person name="Harris N.L."/>
            <person name="Harvey D.A."/>
            <person name="Heiman T.J."/>
            <person name="Hernandez J.R."/>
            <person name="Houck J."/>
            <person name="Hostin D."/>
            <person name="Houston K.A."/>
            <person name="Howland T.J."/>
            <person name="Wei M.-H."/>
            <person name="Ibegwam C."/>
            <person name="Jalali M."/>
            <person name="Kalush F."/>
            <person name="Karpen G.H."/>
            <person name="Ke Z."/>
            <person name="Kennison J.A."/>
            <person name="Ketchum K.A."/>
            <person name="Kimmel B.E."/>
            <person name="Kodira C.D."/>
            <person name="Kraft C.L."/>
            <person name="Kravitz S."/>
            <person name="Kulp D."/>
            <person name="Lai Z."/>
            <person name="Lasko P."/>
            <person name="Lei Y."/>
            <person name="Levitsky A.A."/>
            <person name="Li J.H."/>
            <person name="Li Z."/>
            <person name="Liang Y."/>
            <person name="Lin X."/>
            <person name="Liu X."/>
            <person name="Mattei B."/>
            <person name="McIntosh T.C."/>
            <person name="McLeod M.P."/>
            <person name="McPherson D."/>
            <person name="Merkulov G."/>
            <person name="Milshina N.V."/>
            <person name="Mobarry C."/>
            <person name="Morris J."/>
            <person name="Moshrefi A."/>
            <person name="Mount S.M."/>
            <person name="Moy M."/>
            <person name="Murphy B."/>
            <person name="Murphy L."/>
            <person name="Muzny D.M."/>
            <person name="Nelson D.L."/>
            <person name="Nelson D.R."/>
            <person name="Nelson K.A."/>
            <person name="Nixon K."/>
            <person name="Nusskern D.R."/>
            <person name="Pacleb J.M."/>
            <person name="Palazzolo M."/>
            <person name="Pittman G.S."/>
            <person name="Pan S."/>
            <person name="Pollard J."/>
            <person name="Puri V."/>
            <person name="Reese M.G."/>
            <person name="Reinert K."/>
            <person name="Remington K."/>
            <person name="Saunders R.D.C."/>
            <person name="Scheeler F."/>
            <person name="Shen H."/>
            <person name="Shue B.C."/>
            <person name="Siden-Kiamos I."/>
            <person name="Simpson M."/>
            <person name="Skupski M.P."/>
            <person name="Smith T.J."/>
            <person name="Spier E."/>
            <person name="Spradling A.C."/>
            <person name="Stapleton M."/>
            <person name="Strong R."/>
            <person name="Sun E."/>
            <person name="Svirskas R."/>
            <person name="Tector C."/>
            <person name="Turner R."/>
            <person name="Venter E."/>
            <person name="Wang A.H."/>
            <person name="Wang X."/>
            <person name="Wang Z.-Y."/>
            <person name="Wassarman D.A."/>
            <person name="Weinstock G.M."/>
            <person name="Weissenbach J."/>
            <person name="Williams S.M."/>
            <person name="Woodage T."/>
            <person name="Worley K.C."/>
            <person name="Wu D."/>
            <person name="Yang S."/>
            <person name="Yao Q.A."/>
            <person name="Ye J."/>
            <person name="Yeh R.-F."/>
            <person name="Zaveri J.S."/>
            <person name="Zhan M."/>
            <person name="Zhang G."/>
            <person name="Zhao Q."/>
            <person name="Zheng L."/>
            <person name="Zheng X.H."/>
            <person name="Zhong F.N."/>
            <person name="Zhong W."/>
            <person name="Zhou X."/>
            <person name="Zhu S.C."/>
            <person name="Zhu X."/>
            <person name="Smith H.O."/>
            <person name="Gibbs R.A."/>
            <person name="Myers E.W."/>
            <person name="Rubin G.M."/>
            <person name="Venter J.C."/>
        </authorList>
    </citation>
    <scope>NUCLEOTIDE SEQUENCE [LARGE SCALE GENOMIC DNA]</scope>
    <source>
        <strain>Berkeley</strain>
    </source>
</reference>
<reference evidence="3 4" key="3">
    <citation type="journal article" date="2002" name="Genome Biol.">
        <title>Annotation of the Drosophila melanogaster euchromatic genome: a systematic review.</title>
        <authorList>
            <person name="Misra S."/>
            <person name="Crosby M.A."/>
            <person name="Mungall C.J."/>
            <person name="Matthews B.B."/>
            <person name="Campbell K.S."/>
            <person name="Hradecky P."/>
            <person name="Huang Y."/>
            <person name="Kaminker J.S."/>
            <person name="Millburn G.H."/>
            <person name="Prochnik S.E."/>
            <person name="Smith C.D."/>
            <person name="Tupy J.L."/>
            <person name="Whitfield E.J."/>
            <person name="Bayraktaroglu L."/>
            <person name="Berman B.P."/>
            <person name="Bettencourt B.R."/>
            <person name="Celniker S.E."/>
            <person name="de Grey A.D.N.J."/>
            <person name="Drysdale R.A."/>
            <person name="Harris N.L."/>
            <person name="Richter J."/>
            <person name="Russo S."/>
            <person name="Schroeder A.J."/>
            <person name="Shu S.Q."/>
            <person name="Stapleton M."/>
            <person name="Yamada C."/>
            <person name="Ashburner M."/>
            <person name="Gelbart W.M."/>
            <person name="Rubin G.M."/>
            <person name="Lewis S.E."/>
        </authorList>
    </citation>
    <scope>GENOME REANNOTATION</scope>
    <source>
        <strain>Berkeley</strain>
    </source>
</reference>
<comment type="function">
    <text evidence="2">A humoral factor that may play a role in stress tolerance.</text>
</comment>
<comment type="subcellular location">
    <subcellularLocation>
        <location evidence="2 3">Secreted</location>
    </subcellularLocation>
</comment>
<comment type="developmental stage">
    <text evidence="2">Expressed in late embryos and disappeared by early larval states to reappear in the early pupae.</text>
</comment>
<comment type="induction">
    <text evidence="2">By a variety of stressful conditions including bacterial infection, heat shock and exposure to ultraviolet light.</text>
</comment>
<comment type="similarity">
    <text evidence="1">Belongs to the Turandot family.</text>
</comment>
<sequence>MKTVILFGFLLALLGYLEAEHAQSDPEFTAKARQMLAVFGNSEVDRYTKSRNLPALIEFYEKYSSRLPLTVQDRTYANNVIRRYRAHNNQQVDGVPAQGGVGVVFALLLPFAVSIVEGIAKAIRE</sequence>
<organism>
    <name type="scientific">Drosophila melanogaster</name>
    <name type="common">Fruit fly</name>
    <dbReference type="NCBI Taxonomy" id="7227"/>
    <lineage>
        <taxon>Eukaryota</taxon>
        <taxon>Metazoa</taxon>
        <taxon>Ecdysozoa</taxon>
        <taxon>Arthropoda</taxon>
        <taxon>Hexapoda</taxon>
        <taxon>Insecta</taxon>
        <taxon>Pterygota</taxon>
        <taxon>Neoptera</taxon>
        <taxon>Endopterygota</taxon>
        <taxon>Diptera</taxon>
        <taxon>Brachycera</taxon>
        <taxon>Muscomorpha</taxon>
        <taxon>Ephydroidea</taxon>
        <taxon>Drosophilidae</taxon>
        <taxon>Drosophila</taxon>
        <taxon>Sophophora</taxon>
    </lineage>
</organism>
<name>TOTF_DROME</name>
<keyword id="KW-0391">Immunity</keyword>
<keyword id="KW-0399">Innate immunity</keyword>
<keyword id="KW-1185">Reference proteome</keyword>
<keyword id="KW-0964">Secreted</keyword>
<keyword id="KW-0732">Signal</keyword>
<dbReference type="EMBL" id="AY035991">
    <property type="protein sequence ID" value="AAK64524.1"/>
    <property type="molecule type" value="mRNA"/>
</dbReference>
<dbReference type="EMBL" id="AE014134">
    <property type="protein sequence ID" value="AAF53853.3"/>
    <property type="molecule type" value="Genomic_DNA"/>
</dbReference>
<dbReference type="RefSeq" id="NP_536780.3">
    <property type="nucleotide sequence ID" value="NM_080519.4"/>
</dbReference>
<dbReference type="SMR" id="Q9VIR2"/>
<dbReference type="STRING" id="7227.FBpp0080845"/>
<dbReference type="PaxDb" id="7227-FBpp0080845"/>
<dbReference type="DNASU" id="117461"/>
<dbReference type="EnsemblMetazoa" id="FBtr0081310">
    <property type="protein sequence ID" value="FBpp0080845"/>
    <property type="gene ID" value="FBgn0044811"/>
</dbReference>
<dbReference type="GeneID" id="117461"/>
<dbReference type="KEGG" id="dme:Dmel_CG31691"/>
<dbReference type="UCSC" id="CG31691-RA">
    <property type="organism name" value="d. melanogaster"/>
</dbReference>
<dbReference type="AGR" id="FB:FBgn0044811"/>
<dbReference type="CTD" id="117461"/>
<dbReference type="FlyBase" id="FBgn0044811">
    <property type="gene designation" value="TotF"/>
</dbReference>
<dbReference type="VEuPathDB" id="VectorBase:FBgn0044811"/>
<dbReference type="GeneTree" id="ENSGT00540000073707"/>
<dbReference type="HOGENOM" id="CLU_158853_0_0_1"/>
<dbReference type="InParanoid" id="Q9VIR2"/>
<dbReference type="OMA" id="VCSANAQ"/>
<dbReference type="OrthoDB" id="7846480at2759"/>
<dbReference type="PhylomeDB" id="Q9VIR2"/>
<dbReference type="BioGRID-ORCS" id="117461">
    <property type="hits" value="0 hits in 1 CRISPR screen"/>
</dbReference>
<dbReference type="GenomeRNAi" id="117461"/>
<dbReference type="PRO" id="PR:Q9VIR2"/>
<dbReference type="Proteomes" id="UP000000803">
    <property type="component" value="Chromosome 2L"/>
</dbReference>
<dbReference type="Bgee" id="FBgn0044811">
    <property type="expression patterns" value="Expressed in pupa and 5 other cell types or tissues"/>
</dbReference>
<dbReference type="ExpressionAtlas" id="Q9VIR2">
    <property type="expression patterns" value="baseline"/>
</dbReference>
<dbReference type="GO" id="GO:0005615">
    <property type="term" value="C:extracellular space"/>
    <property type="evidence" value="ECO:0000314"/>
    <property type="project" value="UniProtKB"/>
</dbReference>
<dbReference type="GO" id="GO:0034605">
    <property type="term" value="P:cellular response to heat"/>
    <property type="evidence" value="ECO:0000270"/>
    <property type="project" value="FlyBase"/>
</dbReference>
<dbReference type="GO" id="GO:0034644">
    <property type="term" value="P:cellular response to UV"/>
    <property type="evidence" value="ECO:0000270"/>
    <property type="project" value="FlyBase"/>
</dbReference>
<dbReference type="GO" id="GO:0045087">
    <property type="term" value="P:innate immune response"/>
    <property type="evidence" value="ECO:0007669"/>
    <property type="project" value="UniProtKB-KW"/>
</dbReference>
<dbReference type="GO" id="GO:0009617">
    <property type="term" value="P:response to bacterium"/>
    <property type="evidence" value="ECO:0000314"/>
    <property type="project" value="UniProtKB"/>
</dbReference>
<dbReference type="GO" id="GO:0009408">
    <property type="term" value="P:response to heat"/>
    <property type="evidence" value="ECO:0000314"/>
    <property type="project" value="UniProtKB"/>
</dbReference>
<dbReference type="GO" id="GO:0009411">
    <property type="term" value="P:response to UV"/>
    <property type="evidence" value="ECO:0000314"/>
    <property type="project" value="UniProtKB"/>
</dbReference>
<dbReference type="GO" id="GO:0009615">
    <property type="term" value="P:response to virus"/>
    <property type="evidence" value="ECO:0000315"/>
    <property type="project" value="FlyBase"/>
</dbReference>
<dbReference type="InterPro" id="IPR010825">
    <property type="entry name" value="Turandot"/>
</dbReference>
<dbReference type="Pfam" id="PF07240">
    <property type="entry name" value="Turandot"/>
    <property type="match status" value="1"/>
</dbReference>
<protein>
    <recommendedName>
        <fullName>Protein Turandot F</fullName>
    </recommendedName>
</protein>
<accession>Q9VIR2</accession>
<accession>Q962D8</accession>
<evidence type="ECO:0000255" key="1"/>
<evidence type="ECO:0000269" key="2">
    <source>
    </source>
</evidence>
<evidence type="ECO:0000305" key="3"/>
<evidence type="ECO:0000312" key="4">
    <source>
        <dbReference type="EMBL" id="AAF53853.3"/>
    </source>
</evidence>
<evidence type="ECO:0000312" key="5">
    <source>
        <dbReference type="EMBL" id="AAK64524.1"/>
    </source>
</evidence>
<proteinExistence type="evidence at transcript level"/>
<feature type="signal peptide" evidence="1">
    <location>
        <begin position="1"/>
        <end position="19"/>
    </location>
</feature>
<feature type="chain" id="PRO_0000354992" description="Protein Turandot F">
    <location>
        <begin position="20"/>
        <end position="125"/>
    </location>
</feature>
<feature type="sequence conflict" description="In Ref. 1; AAK64524." evidence="3" ref="1">
    <original>SRN</original>
    <variation>TRK</variation>
    <location>
        <begin position="50"/>
        <end position="52"/>
    </location>
</feature>
<feature type="sequence conflict" description="In Ref. 1; AAK64524." evidence="3" ref="1">
    <original>I</original>
    <variation>V</variation>
    <location>
        <position position="81"/>
    </location>
</feature>
<gene>
    <name evidence="4" type="primary">TotF</name>
    <name type="ORF">CG31691</name>
</gene>